<evidence type="ECO:0000250" key="1"/>
<evidence type="ECO:0000255" key="2">
    <source>
        <dbReference type="PROSITE-ProRule" id="PRU00660"/>
    </source>
</evidence>
<evidence type="ECO:0000305" key="3"/>
<organism>
    <name type="scientific">Mycoplasma pneumoniae (strain ATCC 29342 / M129 / Subtype 1)</name>
    <name type="common">Mycoplasmoides pneumoniae</name>
    <dbReference type="NCBI Taxonomy" id="272634"/>
    <lineage>
        <taxon>Bacteria</taxon>
        <taxon>Bacillati</taxon>
        <taxon>Mycoplasmatota</taxon>
        <taxon>Mycoplasmoidales</taxon>
        <taxon>Mycoplasmoidaceae</taxon>
        <taxon>Mycoplasmoides</taxon>
    </lineage>
</organism>
<reference key="1">
    <citation type="journal article" date="1996" name="Nucleic Acids Res.">
        <title>Complete sequence analysis of the genome of the bacterium Mycoplasma pneumoniae.</title>
        <authorList>
            <person name="Himmelreich R."/>
            <person name="Hilbert H."/>
            <person name="Plagens H."/>
            <person name="Pirkl E."/>
            <person name="Li B.-C."/>
            <person name="Herrmann R."/>
        </authorList>
    </citation>
    <scope>NUCLEOTIDE SEQUENCE [LARGE SCALE GENOMIC DNA]</scope>
    <source>
        <strain>ATCC 29342 / M129 / Subtype 1</strain>
    </source>
</reference>
<proteinExistence type="inferred from homology"/>
<comment type="function">
    <text evidence="1">Key enzyme in folate metabolism. Catalyzes an essential reaction for de novo glycine and purine synthesis, and for DNA precursor synthesis (By similarity).</text>
</comment>
<comment type="catalytic activity">
    <reaction evidence="2">
        <text>(6S)-5,6,7,8-tetrahydrofolate + NADP(+) = 7,8-dihydrofolate + NADPH + H(+)</text>
        <dbReference type="Rhea" id="RHEA:15009"/>
        <dbReference type="ChEBI" id="CHEBI:15378"/>
        <dbReference type="ChEBI" id="CHEBI:57451"/>
        <dbReference type="ChEBI" id="CHEBI:57453"/>
        <dbReference type="ChEBI" id="CHEBI:57783"/>
        <dbReference type="ChEBI" id="CHEBI:58349"/>
        <dbReference type="EC" id="1.5.1.3"/>
    </reaction>
</comment>
<comment type="pathway">
    <text>Cofactor biosynthesis; tetrahydrofolate biosynthesis; 5,6,7,8-tetrahydrofolate from 7,8-dihydrofolate: step 1/1.</text>
</comment>
<comment type="similarity">
    <text evidence="3">Belongs to the dihydrofolate reductase family.</text>
</comment>
<keyword id="KW-0521">NADP</keyword>
<keyword id="KW-0554">One-carbon metabolism</keyword>
<keyword id="KW-0560">Oxidoreductase</keyword>
<keyword id="KW-1185">Reference proteome</keyword>
<dbReference type="EC" id="1.5.1.3"/>
<dbReference type="EMBL" id="U00089">
    <property type="protein sequence ID" value="AAB96163.1"/>
    <property type="molecule type" value="Genomic_DNA"/>
</dbReference>
<dbReference type="PIR" id="S73841">
    <property type="entry name" value="S73841"/>
</dbReference>
<dbReference type="RefSeq" id="NP_110009.1">
    <property type="nucleotide sequence ID" value="NC_000912.1"/>
</dbReference>
<dbReference type="RefSeq" id="WP_010874677.1">
    <property type="nucleotide sequence ID" value="NZ_OU342337.1"/>
</dbReference>
<dbReference type="SMR" id="P78028"/>
<dbReference type="IntAct" id="P78028">
    <property type="interactions" value="5"/>
</dbReference>
<dbReference type="STRING" id="272634.MPN_321"/>
<dbReference type="EnsemblBacteria" id="AAB96163">
    <property type="protein sequence ID" value="AAB96163"/>
    <property type="gene ID" value="MPN_321"/>
</dbReference>
<dbReference type="KEGG" id="mpn:MPN_321"/>
<dbReference type="PATRIC" id="fig|272634.6.peg.345"/>
<dbReference type="HOGENOM" id="CLU_043966_5_2_14"/>
<dbReference type="OrthoDB" id="9804315at2"/>
<dbReference type="BioCyc" id="MetaCyc:MONOMER-579"/>
<dbReference type="BioCyc" id="MPNE272634:G1GJ3-512-MONOMER"/>
<dbReference type="UniPathway" id="UPA00077">
    <property type="reaction ID" value="UER00158"/>
</dbReference>
<dbReference type="Proteomes" id="UP000000808">
    <property type="component" value="Chromosome"/>
</dbReference>
<dbReference type="GO" id="GO:0005829">
    <property type="term" value="C:cytosol"/>
    <property type="evidence" value="ECO:0007669"/>
    <property type="project" value="TreeGrafter"/>
</dbReference>
<dbReference type="GO" id="GO:0004146">
    <property type="term" value="F:dihydrofolate reductase activity"/>
    <property type="evidence" value="ECO:0007669"/>
    <property type="project" value="UniProtKB-EC"/>
</dbReference>
<dbReference type="GO" id="GO:0050661">
    <property type="term" value="F:NADP binding"/>
    <property type="evidence" value="ECO:0007669"/>
    <property type="project" value="InterPro"/>
</dbReference>
<dbReference type="GO" id="GO:0046452">
    <property type="term" value="P:dihydrofolate metabolic process"/>
    <property type="evidence" value="ECO:0007669"/>
    <property type="project" value="TreeGrafter"/>
</dbReference>
<dbReference type="GO" id="GO:0046655">
    <property type="term" value="P:folic acid metabolic process"/>
    <property type="evidence" value="ECO:0007669"/>
    <property type="project" value="TreeGrafter"/>
</dbReference>
<dbReference type="GO" id="GO:0006730">
    <property type="term" value="P:one-carbon metabolic process"/>
    <property type="evidence" value="ECO:0007669"/>
    <property type="project" value="UniProtKB-KW"/>
</dbReference>
<dbReference type="GO" id="GO:0046654">
    <property type="term" value="P:tetrahydrofolate biosynthetic process"/>
    <property type="evidence" value="ECO:0007669"/>
    <property type="project" value="UniProtKB-UniPathway"/>
</dbReference>
<dbReference type="CDD" id="cd00209">
    <property type="entry name" value="DHFR"/>
    <property type="match status" value="1"/>
</dbReference>
<dbReference type="Gene3D" id="3.40.430.10">
    <property type="entry name" value="Dihydrofolate Reductase, subunit A"/>
    <property type="match status" value="1"/>
</dbReference>
<dbReference type="InterPro" id="IPR012259">
    <property type="entry name" value="DHFR"/>
</dbReference>
<dbReference type="InterPro" id="IPR024072">
    <property type="entry name" value="DHFR-like_dom_sf"/>
</dbReference>
<dbReference type="InterPro" id="IPR017925">
    <property type="entry name" value="DHFR_CS"/>
</dbReference>
<dbReference type="InterPro" id="IPR001796">
    <property type="entry name" value="DHFR_dom"/>
</dbReference>
<dbReference type="PANTHER" id="PTHR48069">
    <property type="entry name" value="DIHYDROFOLATE REDUCTASE"/>
    <property type="match status" value="1"/>
</dbReference>
<dbReference type="PANTHER" id="PTHR48069:SF3">
    <property type="entry name" value="DIHYDROFOLATE REDUCTASE"/>
    <property type="match status" value="1"/>
</dbReference>
<dbReference type="Pfam" id="PF00186">
    <property type="entry name" value="DHFR_1"/>
    <property type="match status" value="1"/>
</dbReference>
<dbReference type="PRINTS" id="PR00070">
    <property type="entry name" value="DHFR"/>
</dbReference>
<dbReference type="SUPFAM" id="SSF53597">
    <property type="entry name" value="Dihydrofolate reductase-like"/>
    <property type="match status" value="1"/>
</dbReference>
<dbReference type="PROSITE" id="PS00075">
    <property type="entry name" value="DHFR_1"/>
    <property type="match status" value="1"/>
</dbReference>
<dbReference type="PROSITE" id="PS51330">
    <property type="entry name" value="DHFR_2"/>
    <property type="match status" value="1"/>
</dbReference>
<feature type="chain" id="PRO_0000186396" description="Dihydrofolate reductase">
    <location>
        <begin position="1"/>
        <end position="160"/>
    </location>
</feature>
<feature type="domain" description="DHFR" evidence="2">
    <location>
        <begin position="1"/>
        <end position="160"/>
    </location>
</feature>
<feature type="binding site" evidence="1">
    <location>
        <begin position="5"/>
        <end position="7"/>
    </location>
    <ligand>
        <name>substrate</name>
    </ligand>
</feature>
<feature type="binding site" evidence="1">
    <location>
        <begin position="6"/>
        <end position="7"/>
    </location>
    <ligand>
        <name>NADP(+)</name>
        <dbReference type="ChEBI" id="CHEBI:58349"/>
    </ligand>
</feature>
<feature type="binding site" evidence="1">
    <location>
        <begin position="14"/>
        <end position="19"/>
    </location>
    <ligand>
        <name>NADP(+)</name>
        <dbReference type="ChEBI" id="CHEBI:58349"/>
    </ligand>
</feature>
<feature type="binding site" evidence="1">
    <location>
        <position position="27"/>
    </location>
    <ligand>
        <name>substrate</name>
    </ligand>
</feature>
<feature type="binding site" evidence="1">
    <location>
        <position position="32"/>
    </location>
    <ligand>
        <name>substrate</name>
    </ligand>
</feature>
<feature type="binding site" evidence="1">
    <location>
        <begin position="43"/>
        <end position="46"/>
    </location>
    <ligand>
        <name>NADP(+)</name>
        <dbReference type="ChEBI" id="CHEBI:58349"/>
    </ligand>
</feature>
<feature type="binding site" evidence="1">
    <location>
        <position position="57"/>
    </location>
    <ligand>
        <name>substrate</name>
    </ligand>
</feature>
<feature type="binding site" evidence="1">
    <location>
        <begin position="62"/>
        <end position="65"/>
    </location>
    <ligand>
        <name>NADP(+)</name>
        <dbReference type="ChEBI" id="CHEBI:58349"/>
    </ligand>
</feature>
<feature type="binding site" evidence="1">
    <location>
        <begin position="101"/>
        <end position="106"/>
    </location>
    <ligand>
        <name>NADP(+)</name>
        <dbReference type="ChEBI" id="CHEBI:58349"/>
    </ligand>
</feature>
<feature type="binding site" evidence="1">
    <location>
        <position position="120"/>
    </location>
    <ligand>
        <name>substrate</name>
    </ligand>
</feature>
<name>DYR_MYCPN</name>
<accession>P78028</accession>
<gene>
    <name type="primary">folA</name>
    <name type="synonym">dhfR</name>
    <name type="ordered locus">MPN_321</name>
    <name type="ORF">MP515</name>
</gene>
<protein>
    <recommendedName>
        <fullName>Dihydrofolate reductase</fullName>
        <ecNumber>1.5.1.3</ecNumber>
    </recommendedName>
</protein>
<sequence length="160" mass="18511">MVKAIWAMDQNGLIGNGNSLPWRIKAELQHFRQTTLHQDVLMGSATYLSLPPVFSERNVYILTRNLNFNPPDKGCLTKVIHEYENFIQPYLHHPDKHLYICGGAQVYEQLIPRCDALIVSTIFGKYTGDKYLKVDFSPFELTKEISFAEFKVAYYHKIAR</sequence>